<protein>
    <recommendedName>
        <fullName evidence="1">6,7-dimethyl-8-ribityllumazine synthase</fullName>
        <shortName evidence="1">DMRL synthase</shortName>
        <shortName evidence="1">LS</shortName>
        <shortName evidence="1">Lumazine synthase</shortName>
        <ecNumber evidence="1">2.5.1.78</ecNumber>
    </recommendedName>
</protein>
<sequence>MPTHLEGDLVVDGHRFALVVGRFNEHVTEDLLGGALDTLERHGADLDEVTVVHVPGSWEIPVAAQKCARTGDYDAVICLGAVVRGETPHFDYVCSGATSGTMQTSLDTEVPVLFGILTTDTVDQAIARAGSKAGNKGREAAEAAIEMATLMPKLEG</sequence>
<comment type="function">
    <text evidence="1">Catalyzes the formation of 6,7-dimethyl-8-ribityllumazine by condensation of 5-amino-6-(D-ribitylamino)uracil with 3,4-dihydroxy-2-butanone 4-phosphate. This is the penultimate step in the biosynthesis of riboflavin.</text>
</comment>
<comment type="catalytic activity">
    <reaction evidence="1">
        <text>(2S)-2-hydroxy-3-oxobutyl phosphate + 5-amino-6-(D-ribitylamino)uracil = 6,7-dimethyl-8-(1-D-ribityl)lumazine + phosphate + 2 H2O + H(+)</text>
        <dbReference type="Rhea" id="RHEA:26152"/>
        <dbReference type="ChEBI" id="CHEBI:15377"/>
        <dbReference type="ChEBI" id="CHEBI:15378"/>
        <dbReference type="ChEBI" id="CHEBI:15934"/>
        <dbReference type="ChEBI" id="CHEBI:43474"/>
        <dbReference type="ChEBI" id="CHEBI:58201"/>
        <dbReference type="ChEBI" id="CHEBI:58830"/>
        <dbReference type="EC" id="2.5.1.78"/>
    </reaction>
</comment>
<comment type="pathway">
    <text evidence="1">Cofactor biosynthesis; riboflavin biosynthesis; riboflavin from 2-hydroxy-3-oxobutyl phosphate and 5-amino-6-(D-ribitylamino)uracil: step 1/2.</text>
</comment>
<comment type="similarity">
    <text evidence="1">Belongs to the DMRL synthase family.</text>
</comment>
<organism>
    <name type="scientific">Salinibacter ruber (strain DSM 13855 / M31)</name>
    <dbReference type="NCBI Taxonomy" id="309807"/>
    <lineage>
        <taxon>Bacteria</taxon>
        <taxon>Pseudomonadati</taxon>
        <taxon>Rhodothermota</taxon>
        <taxon>Rhodothermia</taxon>
        <taxon>Rhodothermales</taxon>
        <taxon>Salinibacteraceae</taxon>
        <taxon>Salinibacter</taxon>
    </lineage>
</organism>
<name>RISB_SALRD</name>
<gene>
    <name evidence="1" type="primary">ribH</name>
    <name type="ordered locus">SRU_1068</name>
</gene>
<dbReference type="EC" id="2.5.1.78" evidence="1"/>
<dbReference type="EMBL" id="CP000159">
    <property type="protein sequence ID" value="ABC44827.1"/>
    <property type="molecule type" value="Genomic_DNA"/>
</dbReference>
<dbReference type="RefSeq" id="WP_011403828.1">
    <property type="nucleotide sequence ID" value="NC_007677.1"/>
</dbReference>
<dbReference type="RefSeq" id="YP_445200.1">
    <property type="nucleotide sequence ID" value="NC_007677.1"/>
</dbReference>
<dbReference type="SMR" id="Q2S3N1"/>
<dbReference type="STRING" id="309807.SRU_1068"/>
<dbReference type="EnsemblBacteria" id="ABC44827">
    <property type="protein sequence ID" value="ABC44827"/>
    <property type="gene ID" value="SRU_1068"/>
</dbReference>
<dbReference type="GeneID" id="83727997"/>
<dbReference type="KEGG" id="sru:SRU_1068"/>
<dbReference type="PATRIC" id="fig|309807.25.peg.1107"/>
<dbReference type="eggNOG" id="COG0054">
    <property type="taxonomic scope" value="Bacteria"/>
</dbReference>
<dbReference type="HOGENOM" id="CLU_089358_1_1_10"/>
<dbReference type="OrthoDB" id="9809709at2"/>
<dbReference type="UniPathway" id="UPA00275">
    <property type="reaction ID" value="UER00404"/>
</dbReference>
<dbReference type="Proteomes" id="UP000008674">
    <property type="component" value="Chromosome"/>
</dbReference>
<dbReference type="GO" id="GO:0005829">
    <property type="term" value="C:cytosol"/>
    <property type="evidence" value="ECO:0007669"/>
    <property type="project" value="TreeGrafter"/>
</dbReference>
<dbReference type="GO" id="GO:0009349">
    <property type="term" value="C:riboflavin synthase complex"/>
    <property type="evidence" value="ECO:0007669"/>
    <property type="project" value="InterPro"/>
</dbReference>
<dbReference type="GO" id="GO:0000906">
    <property type="term" value="F:6,7-dimethyl-8-ribityllumazine synthase activity"/>
    <property type="evidence" value="ECO:0007669"/>
    <property type="project" value="UniProtKB-UniRule"/>
</dbReference>
<dbReference type="GO" id="GO:0009231">
    <property type="term" value="P:riboflavin biosynthetic process"/>
    <property type="evidence" value="ECO:0007669"/>
    <property type="project" value="UniProtKB-UniRule"/>
</dbReference>
<dbReference type="CDD" id="cd09209">
    <property type="entry name" value="Lumazine_synthase-I"/>
    <property type="match status" value="1"/>
</dbReference>
<dbReference type="FunFam" id="3.40.50.960:FF:000001">
    <property type="entry name" value="6,7-dimethyl-8-ribityllumazine synthase"/>
    <property type="match status" value="1"/>
</dbReference>
<dbReference type="Gene3D" id="3.40.50.960">
    <property type="entry name" value="Lumazine/riboflavin synthase"/>
    <property type="match status" value="1"/>
</dbReference>
<dbReference type="HAMAP" id="MF_00178">
    <property type="entry name" value="Lumazine_synth"/>
    <property type="match status" value="1"/>
</dbReference>
<dbReference type="InterPro" id="IPR034964">
    <property type="entry name" value="LS"/>
</dbReference>
<dbReference type="InterPro" id="IPR002180">
    <property type="entry name" value="LS/RS"/>
</dbReference>
<dbReference type="InterPro" id="IPR036467">
    <property type="entry name" value="LS/RS_sf"/>
</dbReference>
<dbReference type="NCBIfam" id="TIGR00114">
    <property type="entry name" value="lumazine-synth"/>
    <property type="match status" value="1"/>
</dbReference>
<dbReference type="PANTHER" id="PTHR21058:SF0">
    <property type="entry name" value="6,7-DIMETHYL-8-RIBITYLLUMAZINE SYNTHASE"/>
    <property type="match status" value="1"/>
</dbReference>
<dbReference type="PANTHER" id="PTHR21058">
    <property type="entry name" value="6,7-DIMETHYL-8-RIBITYLLUMAZINE SYNTHASE DMRL SYNTHASE LUMAZINE SYNTHASE"/>
    <property type="match status" value="1"/>
</dbReference>
<dbReference type="Pfam" id="PF00885">
    <property type="entry name" value="DMRL_synthase"/>
    <property type="match status" value="1"/>
</dbReference>
<dbReference type="SUPFAM" id="SSF52121">
    <property type="entry name" value="Lumazine synthase"/>
    <property type="match status" value="1"/>
</dbReference>
<feature type="chain" id="PRO_1000040505" description="6,7-dimethyl-8-ribityllumazine synthase">
    <location>
        <begin position="1"/>
        <end position="156"/>
    </location>
</feature>
<feature type="active site" description="Proton donor" evidence="1">
    <location>
        <position position="89"/>
    </location>
</feature>
<feature type="binding site" evidence="1">
    <location>
        <position position="23"/>
    </location>
    <ligand>
        <name>5-amino-6-(D-ribitylamino)uracil</name>
        <dbReference type="ChEBI" id="CHEBI:15934"/>
    </ligand>
</feature>
<feature type="binding site" evidence="1">
    <location>
        <begin position="57"/>
        <end position="59"/>
    </location>
    <ligand>
        <name>5-amino-6-(D-ribitylamino)uracil</name>
        <dbReference type="ChEBI" id="CHEBI:15934"/>
    </ligand>
</feature>
<feature type="binding site" evidence="1">
    <location>
        <begin position="81"/>
        <end position="83"/>
    </location>
    <ligand>
        <name>5-amino-6-(D-ribitylamino)uracil</name>
        <dbReference type="ChEBI" id="CHEBI:15934"/>
    </ligand>
</feature>
<feature type="binding site" evidence="1">
    <location>
        <begin position="86"/>
        <end position="87"/>
    </location>
    <ligand>
        <name>(2S)-2-hydroxy-3-oxobutyl phosphate</name>
        <dbReference type="ChEBI" id="CHEBI:58830"/>
    </ligand>
</feature>
<feature type="binding site" evidence="1">
    <location>
        <position position="114"/>
    </location>
    <ligand>
        <name>5-amino-6-(D-ribitylamino)uracil</name>
        <dbReference type="ChEBI" id="CHEBI:15934"/>
    </ligand>
</feature>
<feature type="binding site" evidence="1">
    <location>
        <position position="128"/>
    </location>
    <ligand>
        <name>(2S)-2-hydroxy-3-oxobutyl phosphate</name>
        <dbReference type="ChEBI" id="CHEBI:58830"/>
    </ligand>
</feature>
<keyword id="KW-1185">Reference proteome</keyword>
<keyword id="KW-0686">Riboflavin biosynthesis</keyword>
<keyword id="KW-0808">Transferase</keyword>
<accession>Q2S3N1</accession>
<proteinExistence type="inferred from homology"/>
<reference key="1">
    <citation type="journal article" date="2005" name="Proc. Natl. Acad. Sci. U.S.A.">
        <title>The genome of Salinibacter ruber: convergence and gene exchange among hyperhalophilic bacteria and archaea.</title>
        <authorList>
            <person name="Mongodin E.F."/>
            <person name="Nelson K.E."/>
            <person name="Daugherty S."/>
            <person name="DeBoy R.T."/>
            <person name="Wister J."/>
            <person name="Khouri H."/>
            <person name="Weidman J."/>
            <person name="Walsh D.A."/>
            <person name="Papke R.T."/>
            <person name="Sanchez Perez G."/>
            <person name="Sharma A.K."/>
            <person name="Nesbo C.L."/>
            <person name="MacLeod D."/>
            <person name="Bapteste E."/>
            <person name="Doolittle W.F."/>
            <person name="Charlebois R.L."/>
            <person name="Legault B."/>
            <person name="Rodriguez-Valera F."/>
        </authorList>
    </citation>
    <scope>NUCLEOTIDE SEQUENCE [LARGE SCALE GENOMIC DNA]</scope>
    <source>
        <strain>DSM 13855 / CECT 5946 / M31</strain>
    </source>
</reference>
<evidence type="ECO:0000255" key="1">
    <source>
        <dbReference type="HAMAP-Rule" id="MF_00178"/>
    </source>
</evidence>